<gene>
    <name evidence="2" type="primary">infB</name>
    <name type="ordered locus">RPD_0231</name>
</gene>
<reference key="1">
    <citation type="submission" date="2006-03" db="EMBL/GenBank/DDBJ databases">
        <title>Complete sequence of Rhodopseudomonas palustris BisB5.</title>
        <authorList>
            <consortium name="US DOE Joint Genome Institute"/>
            <person name="Copeland A."/>
            <person name="Lucas S."/>
            <person name="Lapidus A."/>
            <person name="Barry K."/>
            <person name="Detter J.C."/>
            <person name="Glavina del Rio T."/>
            <person name="Hammon N."/>
            <person name="Israni S."/>
            <person name="Dalin E."/>
            <person name="Tice H."/>
            <person name="Pitluck S."/>
            <person name="Chain P."/>
            <person name="Malfatti S."/>
            <person name="Shin M."/>
            <person name="Vergez L."/>
            <person name="Schmutz J."/>
            <person name="Larimer F."/>
            <person name="Land M."/>
            <person name="Hauser L."/>
            <person name="Pelletier D.A."/>
            <person name="Kyrpides N."/>
            <person name="Lykidis A."/>
            <person name="Oda Y."/>
            <person name="Harwood C.S."/>
            <person name="Richardson P."/>
        </authorList>
    </citation>
    <scope>NUCLEOTIDE SEQUENCE [LARGE SCALE GENOMIC DNA]</scope>
    <source>
        <strain>BisB5</strain>
    </source>
</reference>
<accession>Q13EL8</accession>
<keyword id="KW-0963">Cytoplasm</keyword>
<keyword id="KW-0342">GTP-binding</keyword>
<keyword id="KW-0396">Initiation factor</keyword>
<keyword id="KW-0547">Nucleotide-binding</keyword>
<keyword id="KW-0648">Protein biosynthesis</keyword>
<comment type="function">
    <text evidence="2">One of the essential components for the initiation of protein synthesis. Protects formylmethionyl-tRNA from spontaneous hydrolysis and promotes its binding to the 30S ribosomal subunits. Also involved in the hydrolysis of GTP during the formation of the 70S ribosomal complex.</text>
</comment>
<comment type="subcellular location">
    <subcellularLocation>
        <location evidence="2">Cytoplasm</location>
    </subcellularLocation>
</comment>
<comment type="similarity">
    <text evidence="2">Belongs to the TRAFAC class translation factor GTPase superfamily. Classic translation factor GTPase family. IF-2 subfamily.</text>
</comment>
<organism>
    <name type="scientific">Rhodopseudomonas palustris (strain BisB5)</name>
    <dbReference type="NCBI Taxonomy" id="316057"/>
    <lineage>
        <taxon>Bacteria</taxon>
        <taxon>Pseudomonadati</taxon>
        <taxon>Pseudomonadota</taxon>
        <taxon>Alphaproteobacteria</taxon>
        <taxon>Hyphomicrobiales</taxon>
        <taxon>Nitrobacteraceae</taxon>
        <taxon>Rhodopseudomonas</taxon>
    </lineage>
</organism>
<name>IF2_RHOPS</name>
<protein>
    <recommendedName>
        <fullName evidence="2">Translation initiation factor IF-2</fullName>
    </recommendedName>
</protein>
<feature type="chain" id="PRO_1000008317" description="Translation initiation factor IF-2">
    <location>
        <begin position="1"/>
        <end position="883"/>
    </location>
</feature>
<feature type="domain" description="tr-type G">
    <location>
        <begin position="380"/>
        <end position="551"/>
    </location>
</feature>
<feature type="region of interest" description="Disordered" evidence="3">
    <location>
        <begin position="1"/>
        <end position="96"/>
    </location>
</feature>
<feature type="region of interest" description="Disordered" evidence="3">
    <location>
        <begin position="132"/>
        <end position="259"/>
    </location>
</feature>
<feature type="region of interest" description="G1" evidence="1">
    <location>
        <begin position="389"/>
        <end position="396"/>
    </location>
</feature>
<feature type="region of interest" description="G2" evidence="1">
    <location>
        <begin position="414"/>
        <end position="418"/>
    </location>
</feature>
<feature type="region of interest" description="G3" evidence="1">
    <location>
        <begin position="437"/>
        <end position="440"/>
    </location>
</feature>
<feature type="region of interest" description="G4" evidence="1">
    <location>
        <begin position="491"/>
        <end position="494"/>
    </location>
</feature>
<feature type="region of interest" description="G5" evidence="1">
    <location>
        <begin position="527"/>
        <end position="529"/>
    </location>
</feature>
<feature type="compositionally biased region" description="Low complexity" evidence="3">
    <location>
        <begin position="57"/>
        <end position="66"/>
    </location>
</feature>
<feature type="compositionally biased region" description="Pro residues" evidence="3">
    <location>
        <begin position="72"/>
        <end position="87"/>
    </location>
</feature>
<feature type="compositionally biased region" description="Basic and acidic residues" evidence="3">
    <location>
        <begin position="132"/>
        <end position="188"/>
    </location>
</feature>
<feature type="compositionally biased region" description="Low complexity" evidence="3">
    <location>
        <begin position="191"/>
        <end position="217"/>
    </location>
</feature>
<feature type="binding site" evidence="2">
    <location>
        <begin position="389"/>
        <end position="396"/>
    </location>
    <ligand>
        <name>GTP</name>
        <dbReference type="ChEBI" id="CHEBI:37565"/>
    </ligand>
</feature>
<feature type="binding site" evidence="2">
    <location>
        <begin position="437"/>
        <end position="441"/>
    </location>
    <ligand>
        <name>GTP</name>
        <dbReference type="ChEBI" id="CHEBI:37565"/>
    </ligand>
</feature>
<feature type="binding site" evidence="2">
    <location>
        <begin position="491"/>
        <end position="494"/>
    </location>
    <ligand>
        <name>GTP</name>
        <dbReference type="ChEBI" id="CHEBI:37565"/>
    </ligand>
</feature>
<proteinExistence type="inferred from homology"/>
<evidence type="ECO:0000250" key="1"/>
<evidence type="ECO:0000255" key="2">
    <source>
        <dbReference type="HAMAP-Rule" id="MF_00100"/>
    </source>
</evidence>
<evidence type="ECO:0000256" key="3">
    <source>
        <dbReference type="SAM" id="MobiDB-lite"/>
    </source>
</evidence>
<dbReference type="EMBL" id="CP000283">
    <property type="protein sequence ID" value="ABE37471.1"/>
    <property type="molecule type" value="Genomic_DNA"/>
</dbReference>
<dbReference type="SMR" id="Q13EL8"/>
<dbReference type="STRING" id="316057.RPD_0231"/>
<dbReference type="KEGG" id="rpd:RPD_0231"/>
<dbReference type="eggNOG" id="COG0532">
    <property type="taxonomic scope" value="Bacteria"/>
</dbReference>
<dbReference type="HOGENOM" id="CLU_006301_10_0_5"/>
<dbReference type="BioCyc" id="RPAL316057:RPD_RS01170-MONOMER"/>
<dbReference type="Proteomes" id="UP000001818">
    <property type="component" value="Chromosome"/>
</dbReference>
<dbReference type="GO" id="GO:0005829">
    <property type="term" value="C:cytosol"/>
    <property type="evidence" value="ECO:0007669"/>
    <property type="project" value="TreeGrafter"/>
</dbReference>
<dbReference type="GO" id="GO:0005525">
    <property type="term" value="F:GTP binding"/>
    <property type="evidence" value="ECO:0007669"/>
    <property type="project" value="UniProtKB-KW"/>
</dbReference>
<dbReference type="GO" id="GO:0003924">
    <property type="term" value="F:GTPase activity"/>
    <property type="evidence" value="ECO:0007669"/>
    <property type="project" value="UniProtKB-UniRule"/>
</dbReference>
<dbReference type="GO" id="GO:0097216">
    <property type="term" value="F:guanosine tetraphosphate binding"/>
    <property type="evidence" value="ECO:0007669"/>
    <property type="project" value="UniProtKB-ARBA"/>
</dbReference>
<dbReference type="GO" id="GO:0003743">
    <property type="term" value="F:translation initiation factor activity"/>
    <property type="evidence" value="ECO:0007669"/>
    <property type="project" value="UniProtKB-UniRule"/>
</dbReference>
<dbReference type="CDD" id="cd01887">
    <property type="entry name" value="IF2_eIF5B"/>
    <property type="match status" value="1"/>
</dbReference>
<dbReference type="CDD" id="cd03702">
    <property type="entry name" value="IF2_mtIF2_II"/>
    <property type="match status" value="1"/>
</dbReference>
<dbReference type="CDD" id="cd03692">
    <property type="entry name" value="mtIF2_IVc"/>
    <property type="match status" value="1"/>
</dbReference>
<dbReference type="FunFam" id="2.40.30.10:FF:000007">
    <property type="entry name" value="Translation initiation factor IF-2"/>
    <property type="match status" value="1"/>
</dbReference>
<dbReference type="FunFam" id="2.40.30.10:FF:000008">
    <property type="entry name" value="Translation initiation factor IF-2"/>
    <property type="match status" value="1"/>
</dbReference>
<dbReference type="FunFam" id="3.40.50.10050:FF:000001">
    <property type="entry name" value="Translation initiation factor IF-2"/>
    <property type="match status" value="1"/>
</dbReference>
<dbReference type="FunFam" id="3.40.50.300:FF:000019">
    <property type="entry name" value="Translation initiation factor IF-2"/>
    <property type="match status" value="1"/>
</dbReference>
<dbReference type="Gene3D" id="3.40.50.300">
    <property type="entry name" value="P-loop containing nucleotide triphosphate hydrolases"/>
    <property type="match status" value="1"/>
</dbReference>
<dbReference type="Gene3D" id="2.40.30.10">
    <property type="entry name" value="Translation factors"/>
    <property type="match status" value="2"/>
</dbReference>
<dbReference type="Gene3D" id="3.40.50.10050">
    <property type="entry name" value="Translation initiation factor IF- 2, domain 3"/>
    <property type="match status" value="1"/>
</dbReference>
<dbReference type="HAMAP" id="MF_00100_B">
    <property type="entry name" value="IF_2_B"/>
    <property type="match status" value="1"/>
</dbReference>
<dbReference type="InterPro" id="IPR053905">
    <property type="entry name" value="EF-G-like_DII"/>
</dbReference>
<dbReference type="InterPro" id="IPR004161">
    <property type="entry name" value="EFTu-like_2"/>
</dbReference>
<dbReference type="InterPro" id="IPR013575">
    <property type="entry name" value="IF2_assoc_dom_bac"/>
</dbReference>
<dbReference type="InterPro" id="IPR044145">
    <property type="entry name" value="IF2_II"/>
</dbReference>
<dbReference type="InterPro" id="IPR006847">
    <property type="entry name" value="IF2_N"/>
</dbReference>
<dbReference type="InterPro" id="IPR027417">
    <property type="entry name" value="P-loop_NTPase"/>
</dbReference>
<dbReference type="InterPro" id="IPR005225">
    <property type="entry name" value="Small_GTP-bd"/>
</dbReference>
<dbReference type="InterPro" id="IPR000795">
    <property type="entry name" value="T_Tr_GTP-bd_dom"/>
</dbReference>
<dbReference type="InterPro" id="IPR000178">
    <property type="entry name" value="TF_IF2_bacterial-like"/>
</dbReference>
<dbReference type="InterPro" id="IPR015760">
    <property type="entry name" value="TIF_IF2"/>
</dbReference>
<dbReference type="InterPro" id="IPR023115">
    <property type="entry name" value="TIF_IF2_dom3"/>
</dbReference>
<dbReference type="InterPro" id="IPR036925">
    <property type="entry name" value="TIF_IF2_dom3_sf"/>
</dbReference>
<dbReference type="InterPro" id="IPR009000">
    <property type="entry name" value="Transl_B-barrel_sf"/>
</dbReference>
<dbReference type="NCBIfam" id="TIGR00487">
    <property type="entry name" value="IF-2"/>
    <property type="match status" value="1"/>
</dbReference>
<dbReference type="NCBIfam" id="TIGR00231">
    <property type="entry name" value="small_GTP"/>
    <property type="match status" value="1"/>
</dbReference>
<dbReference type="PANTHER" id="PTHR43381:SF5">
    <property type="entry name" value="TR-TYPE G DOMAIN-CONTAINING PROTEIN"/>
    <property type="match status" value="1"/>
</dbReference>
<dbReference type="PANTHER" id="PTHR43381">
    <property type="entry name" value="TRANSLATION INITIATION FACTOR IF-2-RELATED"/>
    <property type="match status" value="1"/>
</dbReference>
<dbReference type="Pfam" id="PF22042">
    <property type="entry name" value="EF-G_D2"/>
    <property type="match status" value="1"/>
</dbReference>
<dbReference type="Pfam" id="PF00009">
    <property type="entry name" value="GTP_EFTU"/>
    <property type="match status" value="1"/>
</dbReference>
<dbReference type="Pfam" id="PF03144">
    <property type="entry name" value="GTP_EFTU_D2"/>
    <property type="match status" value="1"/>
</dbReference>
<dbReference type="Pfam" id="PF11987">
    <property type="entry name" value="IF-2"/>
    <property type="match status" value="1"/>
</dbReference>
<dbReference type="Pfam" id="PF08364">
    <property type="entry name" value="IF2_assoc"/>
    <property type="match status" value="1"/>
</dbReference>
<dbReference type="Pfam" id="PF04760">
    <property type="entry name" value="IF2_N"/>
    <property type="match status" value="1"/>
</dbReference>
<dbReference type="SUPFAM" id="SSF52156">
    <property type="entry name" value="Initiation factor IF2/eIF5b, domain 3"/>
    <property type="match status" value="1"/>
</dbReference>
<dbReference type="SUPFAM" id="SSF52540">
    <property type="entry name" value="P-loop containing nucleoside triphosphate hydrolases"/>
    <property type="match status" value="1"/>
</dbReference>
<dbReference type="SUPFAM" id="SSF50447">
    <property type="entry name" value="Translation proteins"/>
    <property type="match status" value="2"/>
</dbReference>
<dbReference type="PROSITE" id="PS51722">
    <property type="entry name" value="G_TR_2"/>
    <property type="match status" value="1"/>
</dbReference>
<dbReference type="PROSITE" id="PS01176">
    <property type="entry name" value="IF2"/>
    <property type="match status" value="1"/>
</dbReference>
<sequence length="883" mass="95349">MVDTKTPGDKTLSMPTKTLTLKPRVEQGVVRQSFSHGRSKQVVVEKRGKRRVGGDGPAEPAAAAPEVVKKPTPAPPAVSPRQQPRPSPQQQARSGMVLRTLTEDERSARATALADARVREVEERRLAEIEAQRRAAQELVDKAEREAAEVRRKAEEERHRHEEETKRKAETEAKKRFGEAEPAKKPADGRPASTSTTTTAPRAPVTTTTRPPAVAAEAGDDDEAPRMVRRGPGGGPARPAPPPKQPAAKPGASKQRGRLTLVTALTADDVRERSIASFRRRTQRLKGHASNEPKEKLVREVIVPEAISIQELANRMSERAVDVIRMLMKQGAMHKINDVIDADTAQLIAEELGHTVKRVAASDVEEGLFDVVDNSTDTEPRSPVVTVMGHVDHGKTSLLDALRHANVVSGEAGGITQHIGAYQVTSPETGTKITFIDTPGHAAFTAMRARGAKVTDIVILVVAADDGVMPQTVEAINHAKAAGVPIIVAINKIDKPDAKPERVRTELLQYNVQVESLGGDVVDVEVSAKNKTNLDKLLEMIALQAELLDLKTNESRPAEGTVIEAKLDRGRGPVATVLVQRGTLKVGDIIVAGAEMGRVRALISDQGDNVDFAGPSVPVEVLGFNGPPEAGDRLAVVENEARARQVTSYRAHQKREKAASIVGMRGSLEQMMSQLKTTGRKDFPLIVKADVQGSLEAILGSLEKLGTDEVAARILHAGVGGISESDVTLAEGFSAVILGFSVRANKEAAAAAKRNGIEIRYYNIIYDLVDDVKKAMSGLLAPTLRETMLGNAQILEIFNISKVGKVAGCRVTDGTVERGANVRLIRDNVVVHEGKLSTLKRFKDEVKEVQSGQECGMAFENYTDMRAGDVIECYRVETIQRSL</sequence>